<evidence type="ECO:0000255" key="1">
    <source>
        <dbReference type="HAMAP-Rule" id="MF_00480"/>
    </source>
</evidence>
<evidence type="ECO:0000305" key="2"/>
<feature type="chain" id="PRO_1000081286" description="Small ribosomal subunit protein uS7">
    <location>
        <begin position="1"/>
        <end position="156"/>
    </location>
</feature>
<reference key="1">
    <citation type="journal article" date="2008" name="PLoS ONE">
        <title>Survival in nuclear waste, extreme resistance, and potential applications gleaned from the genome sequence of Kineococcus radiotolerans SRS30216.</title>
        <authorList>
            <person name="Bagwell C.E."/>
            <person name="Bhat S."/>
            <person name="Hawkins G.M."/>
            <person name="Smith B.W."/>
            <person name="Biswas T."/>
            <person name="Hoover T.R."/>
            <person name="Saunders E."/>
            <person name="Han C.S."/>
            <person name="Tsodikov O.V."/>
            <person name="Shimkets L.J."/>
        </authorList>
    </citation>
    <scope>NUCLEOTIDE SEQUENCE [LARGE SCALE GENOMIC DNA]</scope>
    <source>
        <strain>ATCC BAA-149 / DSM 14245 / SRS30216</strain>
    </source>
</reference>
<organism>
    <name type="scientific">Kineococcus radiotolerans (strain ATCC BAA-149 / DSM 14245 / SRS30216)</name>
    <dbReference type="NCBI Taxonomy" id="266940"/>
    <lineage>
        <taxon>Bacteria</taxon>
        <taxon>Bacillati</taxon>
        <taxon>Actinomycetota</taxon>
        <taxon>Actinomycetes</taxon>
        <taxon>Kineosporiales</taxon>
        <taxon>Kineosporiaceae</taxon>
        <taxon>Kineococcus</taxon>
    </lineage>
</organism>
<protein>
    <recommendedName>
        <fullName evidence="1">Small ribosomal subunit protein uS7</fullName>
    </recommendedName>
    <alternativeName>
        <fullName evidence="2">30S ribosomal protein S7</fullName>
    </alternativeName>
</protein>
<proteinExistence type="inferred from homology"/>
<sequence length="156" mass="17414">MPRKGPAPKRPLVVDPVYQSPLVTQLVNKILLDGKKSVAESIVYGALEGARDKTGGDPVVVLKRALDNVKPAIEVKSRRVGGSTYQVPIEVRPTRSTTLALRWLVGYARQRREKTMTERLLNEILDASNGLGAAVKRREDTHKMAESNRAFAHYRW</sequence>
<keyword id="KW-1185">Reference proteome</keyword>
<keyword id="KW-0687">Ribonucleoprotein</keyword>
<keyword id="KW-0689">Ribosomal protein</keyword>
<keyword id="KW-0694">RNA-binding</keyword>
<keyword id="KW-0699">rRNA-binding</keyword>
<keyword id="KW-0820">tRNA-binding</keyword>
<gene>
    <name evidence="1" type="primary">rpsG</name>
    <name type="ordered locus">Krad_0683</name>
</gene>
<comment type="function">
    <text evidence="1">One of the primary rRNA binding proteins, it binds directly to 16S rRNA where it nucleates assembly of the head domain of the 30S subunit. Is located at the subunit interface close to the decoding center, probably blocks exit of the E-site tRNA.</text>
</comment>
<comment type="subunit">
    <text evidence="1">Part of the 30S ribosomal subunit. Contacts proteins S9 and S11.</text>
</comment>
<comment type="similarity">
    <text evidence="1">Belongs to the universal ribosomal protein uS7 family.</text>
</comment>
<dbReference type="EMBL" id="CP000750">
    <property type="protein sequence ID" value="ABS02172.1"/>
    <property type="molecule type" value="Genomic_DNA"/>
</dbReference>
<dbReference type="RefSeq" id="WP_012084986.1">
    <property type="nucleotide sequence ID" value="NC_009664.2"/>
</dbReference>
<dbReference type="SMR" id="A6W5T3"/>
<dbReference type="STRING" id="266940.Krad_0683"/>
<dbReference type="KEGG" id="kra:Krad_0683"/>
<dbReference type="eggNOG" id="COG0049">
    <property type="taxonomic scope" value="Bacteria"/>
</dbReference>
<dbReference type="HOGENOM" id="CLU_072226_1_1_11"/>
<dbReference type="OrthoDB" id="9807653at2"/>
<dbReference type="Proteomes" id="UP000001116">
    <property type="component" value="Chromosome"/>
</dbReference>
<dbReference type="GO" id="GO:0015935">
    <property type="term" value="C:small ribosomal subunit"/>
    <property type="evidence" value="ECO:0007669"/>
    <property type="project" value="InterPro"/>
</dbReference>
<dbReference type="GO" id="GO:0019843">
    <property type="term" value="F:rRNA binding"/>
    <property type="evidence" value="ECO:0007669"/>
    <property type="project" value="UniProtKB-UniRule"/>
</dbReference>
<dbReference type="GO" id="GO:0003735">
    <property type="term" value="F:structural constituent of ribosome"/>
    <property type="evidence" value="ECO:0007669"/>
    <property type="project" value="InterPro"/>
</dbReference>
<dbReference type="GO" id="GO:0000049">
    <property type="term" value="F:tRNA binding"/>
    <property type="evidence" value="ECO:0007669"/>
    <property type="project" value="UniProtKB-UniRule"/>
</dbReference>
<dbReference type="GO" id="GO:0006412">
    <property type="term" value="P:translation"/>
    <property type="evidence" value="ECO:0007669"/>
    <property type="project" value="UniProtKB-UniRule"/>
</dbReference>
<dbReference type="CDD" id="cd14869">
    <property type="entry name" value="uS7_Bacteria"/>
    <property type="match status" value="1"/>
</dbReference>
<dbReference type="FunFam" id="1.10.455.10:FF:000001">
    <property type="entry name" value="30S ribosomal protein S7"/>
    <property type="match status" value="1"/>
</dbReference>
<dbReference type="Gene3D" id="1.10.455.10">
    <property type="entry name" value="Ribosomal protein S7 domain"/>
    <property type="match status" value="1"/>
</dbReference>
<dbReference type="HAMAP" id="MF_00480_B">
    <property type="entry name" value="Ribosomal_uS7_B"/>
    <property type="match status" value="1"/>
</dbReference>
<dbReference type="InterPro" id="IPR000235">
    <property type="entry name" value="Ribosomal_uS7"/>
</dbReference>
<dbReference type="InterPro" id="IPR005717">
    <property type="entry name" value="Ribosomal_uS7_bac/org-type"/>
</dbReference>
<dbReference type="InterPro" id="IPR020606">
    <property type="entry name" value="Ribosomal_uS7_CS"/>
</dbReference>
<dbReference type="InterPro" id="IPR023798">
    <property type="entry name" value="Ribosomal_uS7_dom"/>
</dbReference>
<dbReference type="InterPro" id="IPR036823">
    <property type="entry name" value="Ribosomal_uS7_dom_sf"/>
</dbReference>
<dbReference type="NCBIfam" id="TIGR01029">
    <property type="entry name" value="rpsG_bact"/>
    <property type="match status" value="1"/>
</dbReference>
<dbReference type="PANTHER" id="PTHR11205">
    <property type="entry name" value="RIBOSOMAL PROTEIN S7"/>
    <property type="match status" value="1"/>
</dbReference>
<dbReference type="Pfam" id="PF00177">
    <property type="entry name" value="Ribosomal_S7"/>
    <property type="match status" value="1"/>
</dbReference>
<dbReference type="PIRSF" id="PIRSF002122">
    <property type="entry name" value="RPS7p_RPS7a_RPS5e_RPS7o"/>
    <property type="match status" value="1"/>
</dbReference>
<dbReference type="SUPFAM" id="SSF47973">
    <property type="entry name" value="Ribosomal protein S7"/>
    <property type="match status" value="1"/>
</dbReference>
<dbReference type="PROSITE" id="PS00052">
    <property type="entry name" value="RIBOSOMAL_S7"/>
    <property type="match status" value="1"/>
</dbReference>
<accession>A6W5T3</accession>
<name>RS7_KINRD</name>